<proteinExistence type="inferred from homology"/>
<name>NUOK_SULSY</name>
<protein>
    <recommendedName>
        <fullName evidence="1">NADH-quinone oxidoreductase subunit K</fullName>
        <ecNumber evidence="1">7.1.1.-</ecNumber>
    </recommendedName>
    <alternativeName>
        <fullName evidence="1">NADH dehydrogenase I subunit K</fullName>
    </alternativeName>
    <alternativeName>
        <fullName evidence="1">NDH-1 subunit K</fullName>
    </alternativeName>
</protein>
<keyword id="KW-0997">Cell inner membrane</keyword>
<keyword id="KW-1003">Cell membrane</keyword>
<keyword id="KW-0472">Membrane</keyword>
<keyword id="KW-0520">NAD</keyword>
<keyword id="KW-0874">Quinone</keyword>
<keyword id="KW-1278">Translocase</keyword>
<keyword id="KW-0812">Transmembrane</keyword>
<keyword id="KW-1133">Transmembrane helix</keyword>
<keyword id="KW-0813">Transport</keyword>
<keyword id="KW-0830">Ubiquinone</keyword>
<comment type="function">
    <text evidence="1">NDH-1 shuttles electrons from NADH, via FMN and iron-sulfur (Fe-S) centers, to quinones in the respiratory chain. The immediate electron acceptor for the enzyme in this species is believed to be ubiquinone. Couples the redox reaction to proton translocation (for every two electrons transferred, four hydrogen ions are translocated across the cytoplasmic membrane), and thus conserves the redox energy in a proton gradient.</text>
</comment>
<comment type="catalytic activity">
    <reaction evidence="1">
        <text>a quinone + NADH + 5 H(+)(in) = a quinol + NAD(+) + 4 H(+)(out)</text>
        <dbReference type="Rhea" id="RHEA:57888"/>
        <dbReference type="ChEBI" id="CHEBI:15378"/>
        <dbReference type="ChEBI" id="CHEBI:24646"/>
        <dbReference type="ChEBI" id="CHEBI:57540"/>
        <dbReference type="ChEBI" id="CHEBI:57945"/>
        <dbReference type="ChEBI" id="CHEBI:132124"/>
    </reaction>
</comment>
<comment type="subunit">
    <text evidence="1">NDH-1 is composed of 14 different subunits. Subunits NuoA, H, J, K, L, M, N constitute the membrane sector of the complex.</text>
</comment>
<comment type="subcellular location">
    <subcellularLocation>
        <location evidence="1">Cell inner membrane</location>
        <topology evidence="1">Multi-pass membrane protein</topology>
    </subcellularLocation>
</comment>
<comment type="similarity">
    <text evidence="1">Belongs to the complex I subunit 4L family.</text>
</comment>
<dbReference type="EC" id="7.1.1.-" evidence="1"/>
<dbReference type="EMBL" id="CP001080">
    <property type="protein sequence ID" value="ACD66506.1"/>
    <property type="molecule type" value="Genomic_DNA"/>
</dbReference>
<dbReference type="RefSeq" id="WP_012459580.1">
    <property type="nucleotide sequence ID" value="NC_010730.1"/>
</dbReference>
<dbReference type="SMR" id="B2V983"/>
<dbReference type="STRING" id="436114.SYO3AOP1_0878"/>
<dbReference type="KEGG" id="sul:SYO3AOP1_0878"/>
<dbReference type="eggNOG" id="COG0713">
    <property type="taxonomic scope" value="Bacteria"/>
</dbReference>
<dbReference type="HOGENOM" id="CLU_144724_0_0_0"/>
<dbReference type="GO" id="GO:0030964">
    <property type="term" value="C:NADH dehydrogenase complex"/>
    <property type="evidence" value="ECO:0007669"/>
    <property type="project" value="TreeGrafter"/>
</dbReference>
<dbReference type="GO" id="GO:0005886">
    <property type="term" value="C:plasma membrane"/>
    <property type="evidence" value="ECO:0007669"/>
    <property type="project" value="UniProtKB-SubCell"/>
</dbReference>
<dbReference type="GO" id="GO:0050136">
    <property type="term" value="F:NADH:ubiquinone reductase (non-electrogenic) activity"/>
    <property type="evidence" value="ECO:0007669"/>
    <property type="project" value="UniProtKB-UniRule"/>
</dbReference>
<dbReference type="GO" id="GO:0048038">
    <property type="term" value="F:quinone binding"/>
    <property type="evidence" value="ECO:0007669"/>
    <property type="project" value="UniProtKB-KW"/>
</dbReference>
<dbReference type="GO" id="GO:0042773">
    <property type="term" value="P:ATP synthesis coupled electron transport"/>
    <property type="evidence" value="ECO:0007669"/>
    <property type="project" value="InterPro"/>
</dbReference>
<dbReference type="FunFam" id="1.10.287.3510:FF:000001">
    <property type="entry name" value="NADH-quinone oxidoreductase subunit K"/>
    <property type="match status" value="1"/>
</dbReference>
<dbReference type="Gene3D" id="1.10.287.3510">
    <property type="match status" value="1"/>
</dbReference>
<dbReference type="HAMAP" id="MF_01456">
    <property type="entry name" value="NDH1_NuoK"/>
    <property type="match status" value="1"/>
</dbReference>
<dbReference type="InterPro" id="IPR001133">
    <property type="entry name" value="NADH_UbQ_OxRdtase_chain4L/K"/>
</dbReference>
<dbReference type="InterPro" id="IPR039428">
    <property type="entry name" value="NUOK/Mnh_C1-like"/>
</dbReference>
<dbReference type="NCBIfam" id="NF004320">
    <property type="entry name" value="PRK05715.1-2"/>
    <property type="match status" value="1"/>
</dbReference>
<dbReference type="NCBIfam" id="NF004321">
    <property type="entry name" value="PRK05715.1-3"/>
    <property type="match status" value="1"/>
</dbReference>
<dbReference type="NCBIfam" id="NF004323">
    <property type="entry name" value="PRK05715.1-5"/>
    <property type="match status" value="1"/>
</dbReference>
<dbReference type="PANTHER" id="PTHR11434:SF16">
    <property type="entry name" value="NADH-UBIQUINONE OXIDOREDUCTASE CHAIN 4L"/>
    <property type="match status" value="1"/>
</dbReference>
<dbReference type="PANTHER" id="PTHR11434">
    <property type="entry name" value="NADH-UBIQUINONE OXIDOREDUCTASE SUBUNIT ND4L"/>
    <property type="match status" value="1"/>
</dbReference>
<dbReference type="Pfam" id="PF00420">
    <property type="entry name" value="Oxidored_q2"/>
    <property type="match status" value="1"/>
</dbReference>
<evidence type="ECO:0000255" key="1">
    <source>
        <dbReference type="HAMAP-Rule" id="MF_01456"/>
    </source>
</evidence>
<sequence>MVPFEYYVALSGLLMVLGFIGVIIRKNIIAMLLSTELMLNAVNIAFVAFDMKLHDVVGQVFVFFILTIAAAEAAIGLGLIIAIYRMKKDVDVEKLTELKG</sequence>
<feature type="chain" id="PRO_0000390255" description="NADH-quinone oxidoreductase subunit K">
    <location>
        <begin position="1"/>
        <end position="100"/>
    </location>
</feature>
<feature type="transmembrane region" description="Helical" evidence="1">
    <location>
        <begin position="4"/>
        <end position="24"/>
    </location>
</feature>
<feature type="transmembrane region" description="Helical" evidence="1">
    <location>
        <begin position="28"/>
        <end position="48"/>
    </location>
</feature>
<feature type="transmembrane region" description="Helical" evidence="1">
    <location>
        <begin position="61"/>
        <end position="81"/>
    </location>
</feature>
<gene>
    <name evidence="1" type="primary">nuoK</name>
    <name type="ordered locus">SYO3AOP1_0878</name>
</gene>
<organism>
    <name type="scientific">Sulfurihydrogenibium sp. (strain YO3AOP1)</name>
    <dbReference type="NCBI Taxonomy" id="436114"/>
    <lineage>
        <taxon>Bacteria</taxon>
        <taxon>Pseudomonadati</taxon>
        <taxon>Aquificota</taxon>
        <taxon>Aquificia</taxon>
        <taxon>Aquificales</taxon>
        <taxon>Hydrogenothermaceae</taxon>
        <taxon>Sulfurihydrogenibium</taxon>
    </lineage>
</organism>
<accession>B2V983</accession>
<reference key="1">
    <citation type="journal article" date="2009" name="J. Bacteriol.">
        <title>Complete and draft genome sequences of six members of the Aquificales.</title>
        <authorList>
            <person name="Reysenbach A.-L."/>
            <person name="Hamamura N."/>
            <person name="Podar M."/>
            <person name="Griffiths E."/>
            <person name="Ferreira S."/>
            <person name="Hochstein R."/>
            <person name="Heidelberg J."/>
            <person name="Johnson J."/>
            <person name="Mead D."/>
            <person name="Pohorille A."/>
            <person name="Sarmiento M."/>
            <person name="Schweighofer K."/>
            <person name="Seshadri R."/>
            <person name="Voytek M.A."/>
        </authorList>
    </citation>
    <scope>NUCLEOTIDE SEQUENCE [LARGE SCALE GENOMIC DNA]</scope>
    <source>
        <strain>YO3AOP1</strain>
    </source>
</reference>